<comment type="function">
    <text evidence="4 5">Hydrolyzes lysoglycerophospholipids to produce lysophosphatidic acid (LPA) and the corresponding amines (PubMed:25528375, PubMed:27637550). Shows a preference for 1-O-alkyl-sn-glycero-3-phosphocholine (lyso-PAF), lysophosphatidylcholine (lyso-PC) and N-acylethanolamine lysophospholipids (PubMed:25528375). Does not display glycerophosphodiester phosphodiesterase activity, since it cannot hydrolyze either glycerophosphoinositol or glycerophosphocholine (PubMed:25528375).</text>
</comment>
<comment type="catalytic activity">
    <reaction evidence="4 5">
        <text>1-hexadecanoyl-sn-glycero-3-phosphocholine + H2O = 1-hexadecanoyl-sn-glycero-3-phosphate + choline + H(+)</text>
        <dbReference type="Rhea" id="RHEA:38975"/>
        <dbReference type="ChEBI" id="CHEBI:15354"/>
        <dbReference type="ChEBI" id="CHEBI:15377"/>
        <dbReference type="ChEBI" id="CHEBI:15378"/>
        <dbReference type="ChEBI" id="CHEBI:57518"/>
        <dbReference type="ChEBI" id="CHEBI:72998"/>
    </reaction>
    <physiologicalReaction direction="left-to-right" evidence="4">
        <dbReference type="Rhea" id="RHEA:38976"/>
    </physiologicalReaction>
</comment>
<comment type="catalytic activity">
    <reaction evidence="4">
        <text>1-O-hexadecyl-sn-glycero-3-phosphocholine + H2O = 1-O-hexadecyl-sn-glycero-3-phosphate + choline + H(+)</text>
        <dbReference type="Rhea" id="RHEA:41143"/>
        <dbReference type="ChEBI" id="CHEBI:15354"/>
        <dbReference type="ChEBI" id="CHEBI:15377"/>
        <dbReference type="ChEBI" id="CHEBI:15378"/>
        <dbReference type="ChEBI" id="CHEBI:64496"/>
        <dbReference type="ChEBI" id="CHEBI:77580"/>
    </reaction>
    <physiologicalReaction direction="left-to-right" evidence="4">
        <dbReference type="Rhea" id="RHEA:41144"/>
    </physiologicalReaction>
</comment>
<comment type="catalytic activity">
    <reaction evidence="5">
        <text>1-O-(1Z-octadecenyl)-sn-glycero-3-phospho-N-hexadecanoyl-ethanolamine + H2O = 1-O-(1Z-octadecenyl)-sn-glycero-3-phosphate + N-hexadecanoylethanolamine + H(+)</text>
        <dbReference type="Rhea" id="RHEA:53184"/>
        <dbReference type="ChEBI" id="CHEBI:15377"/>
        <dbReference type="ChEBI" id="CHEBI:15378"/>
        <dbReference type="ChEBI" id="CHEBI:71464"/>
        <dbReference type="ChEBI" id="CHEBI:137009"/>
        <dbReference type="ChEBI" id="CHEBI:137017"/>
    </reaction>
    <physiologicalReaction direction="left-to-right" evidence="8">
        <dbReference type="Rhea" id="RHEA:53185"/>
    </physiologicalReaction>
</comment>
<comment type="catalytic activity">
    <reaction evidence="5">
        <text>N-(5Z,8Z,11Z,14Z-eicosatetraenoyl)-1-(9Z-octadecenoyl)-sn-glycero-3-phosphoethanolamine + H2O = N-(5Z,8Z,11Z,14Z-eicosatetraenoyl)-ethanolamine + 1-(9Z-octadecenoyl)-sn-glycero-3-phosphate + H(+)</text>
        <dbReference type="Rhea" id="RHEA:45544"/>
        <dbReference type="ChEBI" id="CHEBI:2700"/>
        <dbReference type="ChEBI" id="CHEBI:15377"/>
        <dbReference type="ChEBI" id="CHEBI:15378"/>
        <dbReference type="ChEBI" id="CHEBI:74544"/>
        <dbReference type="ChEBI" id="CHEBI:85223"/>
    </reaction>
    <physiologicalReaction direction="left-to-right" evidence="8">
        <dbReference type="Rhea" id="RHEA:45545"/>
    </physiologicalReaction>
</comment>
<comment type="catalytic activity">
    <reaction evidence="5">
        <text>N,1-di-(9Z-octadecenoyl)-sn-glycero-3-phosphoethanolamine + H2O = N-(9Z-octadecenoyl) ethanolamine + 1-(9Z-octadecenoyl)-sn-glycero-3-phosphate + H(+)</text>
        <dbReference type="Rhea" id="RHEA:56460"/>
        <dbReference type="ChEBI" id="CHEBI:15377"/>
        <dbReference type="ChEBI" id="CHEBI:15378"/>
        <dbReference type="ChEBI" id="CHEBI:71466"/>
        <dbReference type="ChEBI" id="CHEBI:74544"/>
        <dbReference type="ChEBI" id="CHEBI:85222"/>
    </reaction>
    <physiologicalReaction direction="left-to-right" evidence="8">
        <dbReference type="Rhea" id="RHEA:56461"/>
    </physiologicalReaction>
</comment>
<comment type="catalytic activity">
    <reaction evidence="5">
        <text>N-hexadecanoyl-1-(9Z-octadecenoyl)-sn-glycero-3-phosphoethanolamine + H2O = N-hexadecanoylethanolamine + 1-(9Z-octadecenoyl)-sn-glycero-3-phosphate + H(+)</text>
        <dbReference type="Rhea" id="RHEA:53168"/>
        <dbReference type="ChEBI" id="CHEBI:15377"/>
        <dbReference type="ChEBI" id="CHEBI:15378"/>
        <dbReference type="ChEBI" id="CHEBI:71464"/>
        <dbReference type="ChEBI" id="CHEBI:74544"/>
        <dbReference type="ChEBI" id="CHEBI:85217"/>
    </reaction>
    <physiologicalReaction direction="left-to-right" evidence="8">
        <dbReference type="Rhea" id="RHEA:53169"/>
    </physiologicalReaction>
</comment>
<comment type="catalytic activity">
    <reaction evidence="1">
        <text>1-hexadecanoyl-sn-glycero-3-phosphocholine + H2O = sn-glycerol 3-phosphocholine + hexadecanoate + H(+)</text>
        <dbReference type="Rhea" id="RHEA:40435"/>
        <dbReference type="ChEBI" id="CHEBI:7896"/>
        <dbReference type="ChEBI" id="CHEBI:15377"/>
        <dbReference type="ChEBI" id="CHEBI:15378"/>
        <dbReference type="ChEBI" id="CHEBI:16870"/>
        <dbReference type="ChEBI" id="CHEBI:72998"/>
    </reaction>
</comment>
<comment type="activity regulation">
    <text evidence="1">Lysophospholipase D activity is stimulated by calcium. Loss of lysophospholipase D activity in presence of EDTA.</text>
</comment>
<comment type="subcellular location">
    <subcellularLocation>
        <location evidence="7">Membrane</location>
        <topology evidence="7">Multi-pass membrane protein</topology>
    </subcellularLocation>
    <subcellularLocation>
        <location evidence="4">Cytoplasm</location>
        <location evidence="4">Perinuclear region</location>
    </subcellularLocation>
    <subcellularLocation>
        <location evidence="4">Endoplasmic reticulum membrane</location>
        <topology evidence="7">Multi-pass membrane protein</topology>
    </subcellularLocation>
    <text evidence="4">Partially colocalized with CANX (PubMed:25528375).</text>
</comment>
<comment type="tissue specificity">
    <text evidence="4 5">Highly expressed in stomach and kidney. In stomach detected in the glandular epithelium. Predominantly expressed in the stomach (at protein level).</text>
</comment>
<comment type="similarity">
    <text evidence="7">Belongs to the glycerophosphoryl diester phosphodiesterase family.</text>
</comment>
<comment type="sequence caution" evidence="7">
    <conflict type="miscellaneous discrepancy">
        <sequence resource="EMBL" id="BC002172"/>
    </conflict>
    <text>Contaminating sequence. Sequence of unknown origin in the N-terminal part.</text>
</comment>
<protein>
    <recommendedName>
        <fullName evidence="7">Lysophospholipase D GDPD3</fullName>
        <ecNumber evidence="4 5">3.1.4.-</ecNumber>
    </recommendedName>
    <alternativeName>
        <fullName evidence="6">Glycerophosphodiester phosphodiesterase 7</fullName>
    </alternativeName>
    <alternativeName>
        <fullName>Glycerophosphodiester phosphodiesterase domain-containing protein 3</fullName>
    </alternativeName>
</protein>
<dbReference type="EC" id="3.1.4.-" evidence="4 5"/>
<dbReference type="EMBL" id="AK003726">
    <property type="protein sequence ID" value="BAB22961.1"/>
    <property type="molecule type" value="mRNA"/>
</dbReference>
<dbReference type="EMBL" id="BC002172">
    <property type="status" value="NOT_ANNOTATED_CDS"/>
    <property type="molecule type" value="mRNA"/>
</dbReference>
<dbReference type="CCDS" id="CCDS40130.1"/>
<dbReference type="RefSeq" id="NP_077190.2">
    <property type="nucleotide sequence ID" value="NM_024228.2"/>
</dbReference>
<dbReference type="SMR" id="Q99LY2"/>
<dbReference type="FunCoup" id="Q99LY2">
    <property type="interactions" value="74"/>
</dbReference>
<dbReference type="STRING" id="10090.ENSMUSP00000032944"/>
<dbReference type="SwissLipids" id="SLP:000001719"/>
<dbReference type="iPTMnet" id="Q99LY2"/>
<dbReference type="PhosphoSitePlus" id="Q99LY2"/>
<dbReference type="PaxDb" id="10090-ENSMUSP00000032944"/>
<dbReference type="ProteomicsDB" id="272950"/>
<dbReference type="Antibodypedia" id="51979">
    <property type="antibodies" value="122 antibodies from 16 providers"/>
</dbReference>
<dbReference type="DNASU" id="68616"/>
<dbReference type="Ensembl" id="ENSMUST00000032944.9">
    <property type="protein sequence ID" value="ENSMUSP00000032944.8"/>
    <property type="gene ID" value="ENSMUSG00000030703.9"/>
</dbReference>
<dbReference type="GeneID" id="68616"/>
<dbReference type="KEGG" id="mmu:68616"/>
<dbReference type="UCSC" id="uc009jso.1">
    <property type="organism name" value="mouse"/>
</dbReference>
<dbReference type="AGR" id="MGI:1915866"/>
<dbReference type="CTD" id="79153"/>
<dbReference type="MGI" id="MGI:1915866">
    <property type="gene designation" value="Gdpd3"/>
</dbReference>
<dbReference type="VEuPathDB" id="HostDB:ENSMUSG00000030703"/>
<dbReference type="eggNOG" id="KOG2258">
    <property type="taxonomic scope" value="Eukaryota"/>
</dbReference>
<dbReference type="GeneTree" id="ENSGT00940000160759"/>
<dbReference type="HOGENOM" id="CLU_030006_5_0_1"/>
<dbReference type="InParanoid" id="Q99LY2"/>
<dbReference type="OMA" id="KWAIMRK"/>
<dbReference type="OrthoDB" id="1058301at2759"/>
<dbReference type="PhylomeDB" id="Q99LY2"/>
<dbReference type="TreeFam" id="TF328545"/>
<dbReference type="BRENDA" id="3.1.4.39">
    <property type="organism ID" value="3474"/>
</dbReference>
<dbReference type="BioGRID-ORCS" id="68616">
    <property type="hits" value="3 hits in 79 CRISPR screens"/>
</dbReference>
<dbReference type="ChiTaRS" id="Gdpd3">
    <property type="organism name" value="mouse"/>
</dbReference>
<dbReference type="PRO" id="PR:Q99LY2"/>
<dbReference type="Proteomes" id="UP000000589">
    <property type="component" value="Chromosome 7"/>
</dbReference>
<dbReference type="RNAct" id="Q99LY2">
    <property type="molecule type" value="protein"/>
</dbReference>
<dbReference type="Bgee" id="ENSMUSG00000030703">
    <property type="expression patterns" value="Expressed in plantaris and 125 other cell types or tissues"/>
</dbReference>
<dbReference type="GO" id="GO:0005789">
    <property type="term" value="C:endoplasmic reticulum membrane"/>
    <property type="evidence" value="ECO:0000314"/>
    <property type="project" value="UniProtKB"/>
</dbReference>
<dbReference type="GO" id="GO:0048471">
    <property type="term" value="C:perinuclear region of cytoplasm"/>
    <property type="evidence" value="ECO:0000314"/>
    <property type="project" value="UniProtKB"/>
</dbReference>
<dbReference type="GO" id="GO:0004622">
    <property type="term" value="F:lysophospholipase activity"/>
    <property type="evidence" value="ECO:0000269"/>
    <property type="project" value="Reactome"/>
</dbReference>
<dbReference type="GO" id="GO:0046872">
    <property type="term" value="F:metal ion binding"/>
    <property type="evidence" value="ECO:0007669"/>
    <property type="project" value="UniProtKB-KW"/>
</dbReference>
<dbReference type="GO" id="GO:0008081">
    <property type="term" value="F:phosphoric diester hydrolase activity"/>
    <property type="evidence" value="ECO:0000315"/>
    <property type="project" value="UniProtKB"/>
</dbReference>
<dbReference type="GO" id="GO:0070291">
    <property type="term" value="P:N-acylethanolamine metabolic process"/>
    <property type="evidence" value="ECO:0000315"/>
    <property type="project" value="UniProtKB"/>
</dbReference>
<dbReference type="GO" id="GO:0034638">
    <property type="term" value="P:phosphatidylcholine catabolic process"/>
    <property type="evidence" value="ECO:0000314"/>
    <property type="project" value="UniProtKB"/>
</dbReference>
<dbReference type="GO" id="GO:0006644">
    <property type="term" value="P:phospholipid metabolic process"/>
    <property type="evidence" value="ECO:0000314"/>
    <property type="project" value="UniProtKB"/>
</dbReference>
<dbReference type="CDD" id="cd08612">
    <property type="entry name" value="GDPD_GDE4"/>
    <property type="match status" value="1"/>
</dbReference>
<dbReference type="FunFam" id="3.20.20.190:FF:000033">
    <property type="entry name" value="Glycerophosphodiester phosphodiesterase domain containing 3"/>
    <property type="match status" value="1"/>
</dbReference>
<dbReference type="Gene3D" id="3.20.20.190">
    <property type="entry name" value="Phosphatidylinositol (PI) phosphodiesterase"/>
    <property type="match status" value="1"/>
</dbReference>
<dbReference type="InterPro" id="IPR052271">
    <property type="entry name" value="GDPD-Related"/>
</dbReference>
<dbReference type="InterPro" id="IPR030395">
    <property type="entry name" value="GP_PDE_dom"/>
</dbReference>
<dbReference type="InterPro" id="IPR017946">
    <property type="entry name" value="PLC-like_Pdiesterase_TIM-brl"/>
</dbReference>
<dbReference type="PANTHER" id="PTHR42758:SF3">
    <property type="entry name" value="LYSOPHOSPHOLIPASE D GDPD3"/>
    <property type="match status" value="1"/>
</dbReference>
<dbReference type="PANTHER" id="PTHR42758">
    <property type="entry name" value="PHOSPHATIDYLGLYCEROL PHOSPHOLIPASE C"/>
    <property type="match status" value="1"/>
</dbReference>
<dbReference type="Pfam" id="PF03009">
    <property type="entry name" value="GDPD"/>
    <property type="match status" value="1"/>
</dbReference>
<dbReference type="SUPFAM" id="SSF51695">
    <property type="entry name" value="PLC-like phosphodiesterases"/>
    <property type="match status" value="1"/>
</dbReference>
<dbReference type="PROSITE" id="PS51704">
    <property type="entry name" value="GP_PDE"/>
    <property type="match status" value="1"/>
</dbReference>
<name>GDPD3_MOUSE</name>
<keyword id="KW-0963">Cytoplasm</keyword>
<keyword id="KW-0256">Endoplasmic reticulum</keyword>
<keyword id="KW-0378">Hydrolase</keyword>
<keyword id="KW-0443">Lipid metabolism</keyword>
<keyword id="KW-0472">Membrane</keyword>
<keyword id="KW-0479">Metal-binding</keyword>
<keyword id="KW-1185">Reference proteome</keyword>
<keyword id="KW-0812">Transmembrane</keyword>
<keyword id="KW-1133">Transmembrane helix</keyword>
<evidence type="ECO:0000250" key="1">
    <source>
        <dbReference type="UniProtKB" id="Q7L5L3"/>
    </source>
</evidence>
<evidence type="ECO:0000255" key="2"/>
<evidence type="ECO:0000256" key="3">
    <source>
        <dbReference type="SAM" id="MobiDB-lite"/>
    </source>
</evidence>
<evidence type="ECO:0000269" key="4">
    <source>
    </source>
</evidence>
<evidence type="ECO:0000269" key="5">
    <source>
    </source>
</evidence>
<evidence type="ECO:0000303" key="6">
    <source>
    </source>
</evidence>
<evidence type="ECO:0000305" key="7"/>
<evidence type="ECO:0000305" key="8">
    <source>
    </source>
</evidence>
<evidence type="ECO:0000312" key="9">
    <source>
        <dbReference type="MGI" id="MGI:1915866"/>
    </source>
</evidence>
<proteinExistence type="evidence at protein level"/>
<gene>
    <name evidence="9" type="primary">Gdpd3</name>
    <name evidence="6" type="synonym">Gde7</name>
</gene>
<sequence length="330" mass="38488">MIPLLYFVLPTLGSYVMLSIFFLRRPHLLHTPRAPVFPIRLAAHRGGSGERLENTMEAVENSMAQRADLLEFDCQLTRDGVVVVSHDKNLSRQSGLNKDVNTLDFEELPLYKEELEIYFSPGHFAHGSDRHMISLEDVFQKFPRTPMCLEVKERNEELIHKVANLTRRFDRNEITIWAAEKSSVMKRCRAANPEMPMAFTIWRSFWILLLYYLGLLPFVSIPEKFFFCFLPTIINRTYFPFRCGWMNQLSATITKWIIMRKSLIRHLQDRGVQVLFWCLNEESDFEVAFSLGANGVMTDYPTALRHYLDKQEEETQPPQPEALSCLSLKK</sequence>
<accession>Q99LY2</accession>
<accession>Q9D1C0</accession>
<reference key="1">
    <citation type="journal article" date="2005" name="Science">
        <title>The transcriptional landscape of the mammalian genome.</title>
        <authorList>
            <person name="Carninci P."/>
            <person name="Kasukawa T."/>
            <person name="Katayama S."/>
            <person name="Gough J."/>
            <person name="Frith M.C."/>
            <person name="Maeda N."/>
            <person name="Oyama R."/>
            <person name="Ravasi T."/>
            <person name="Lenhard B."/>
            <person name="Wells C."/>
            <person name="Kodzius R."/>
            <person name="Shimokawa K."/>
            <person name="Bajic V.B."/>
            <person name="Brenner S.E."/>
            <person name="Batalov S."/>
            <person name="Forrest A.R."/>
            <person name="Zavolan M."/>
            <person name="Davis M.J."/>
            <person name="Wilming L.G."/>
            <person name="Aidinis V."/>
            <person name="Allen J.E."/>
            <person name="Ambesi-Impiombato A."/>
            <person name="Apweiler R."/>
            <person name="Aturaliya R.N."/>
            <person name="Bailey T.L."/>
            <person name="Bansal M."/>
            <person name="Baxter L."/>
            <person name="Beisel K.W."/>
            <person name="Bersano T."/>
            <person name="Bono H."/>
            <person name="Chalk A.M."/>
            <person name="Chiu K.P."/>
            <person name="Choudhary V."/>
            <person name="Christoffels A."/>
            <person name="Clutterbuck D.R."/>
            <person name="Crowe M.L."/>
            <person name="Dalla E."/>
            <person name="Dalrymple B.P."/>
            <person name="de Bono B."/>
            <person name="Della Gatta G."/>
            <person name="di Bernardo D."/>
            <person name="Down T."/>
            <person name="Engstrom P."/>
            <person name="Fagiolini M."/>
            <person name="Faulkner G."/>
            <person name="Fletcher C.F."/>
            <person name="Fukushima T."/>
            <person name="Furuno M."/>
            <person name="Futaki S."/>
            <person name="Gariboldi M."/>
            <person name="Georgii-Hemming P."/>
            <person name="Gingeras T.R."/>
            <person name="Gojobori T."/>
            <person name="Green R.E."/>
            <person name="Gustincich S."/>
            <person name="Harbers M."/>
            <person name="Hayashi Y."/>
            <person name="Hensch T.K."/>
            <person name="Hirokawa N."/>
            <person name="Hill D."/>
            <person name="Huminiecki L."/>
            <person name="Iacono M."/>
            <person name="Ikeo K."/>
            <person name="Iwama A."/>
            <person name="Ishikawa T."/>
            <person name="Jakt M."/>
            <person name="Kanapin A."/>
            <person name="Katoh M."/>
            <person name="Kawasawa Y."/>
            <person name="Kelso J."/>
            <person name="Kitamura H."/>
            <person name="Kitano H."/>
            <person name="Kollias G."/>
            <person name="Krishnan S.P."/>
            <person name="Kruger A."/>
            <person name="Kummerfeld S.K."/>
            <person name="Kurochkin I.V."/>
            <person name="Lareau L.F."/>
            <person name="Lazarevic D."/>
            <person name="Lipovich L."/>
            <person name="Liu J."/>
            <person name="Liuni S."/>
            <person name="McWilliam S."/>
            <person name="Madan Babu M."/>
            <person name="Madera M."/>
            <person name="Marchionni L."/>
            <person name="Matsuda H."/>
            <person name="Matsuzawa S."/>
            <person name="Miki H."/>
            <person name="Mignone F."/>
            <person name="Miyake S."/>
            <person name="Morris K."/>
            <person name="Mottagui-Tabar S."/>
            <person name="Mulder N."/>
            <person name="Nakano N."/>
            <person name="Nakauchi H."/>
            <person name="Ng P."/>
            <person name="Nilsson R."/>
            <person name="Nishiguchi S."/>
            <person name="Nishikawa S."/>
            <person name="Nori F."/>
            <person name="Ohara O."/>
            <person name="Okazaki Y."/>
            <person name="Orlando V."/>
            <person name="Pang K.C."/>
            <person name="Pavan W.J."/>
            <person name="Pavesi G."/>
            <person name="Pesole G."/>
            <person name="Petrovsky N."/>
            <person name="Piazza S."/>
            <person name="Reed J."/>
            <person name="Reid J.F."/>
            <person name="Ring B.Z."/>
            <person name="Ringwald M."/>
            <person name="Rost B."/>
            <person name="Ruan Y."/>
            <person name="Salzberg S.L."/>
            <person name="Sandelin A."/>
            <person name="Schneider C."/>
            <person name="Schoenbach C."/>
            <person name="Sekiguchi K."/>
            <person name="Semple C.A."/>
            <person name="Seno S."/>
            <person name="Sessa L."/>
            <person name="Sheng Y."/>
            <person name="Shibata Y."/>
            <person name="Shimada H."/>
            <person name="Shimada K."/>
            <person name="Silva D."/>
            <person name="Sinclair B."/>
            <person name="Sperling S."/>
            <person name="Stupka E."/>
            <person name="Sugiura K."/>
            <person name="Sultana R."/>
            <person name="Takenaka Y."/>
            <person name="Taki K."/>
            <person name="Tammoja K."/>
            <person name="Tan S.L."/>
            <person name="Tang S."/>
            <person name="Taylor M.S."/>
            <person name="Tegner J."/>
            <person name="Teichmann S.A."/>
            <person name="Ueda H.R."/>
            <person name="van Nimwegen E."/>
            <person name="Verardo R."/>
            <person name="Wei C.L."/>
            <person name="Yagi K."/>
            <person name="Yamanishi H."/>
            <person name="Zabarovsky E."/>
            <person name="Zhu S."/>
            <person name="Zimmer A."/>
            <person name="Hide W."/>
            <person name="Bult C."/>
            <person name="Grimmond S.M."/>
            <person name="Teasdale R.D."/>
            <person name="Liu E.T."/>
            <person name="Brusic V."/>
            <person name="Quackenbush J."/>
            <person name="Wahlestedt C."/>
            <person name="Mattick J.S."/>
            <person name="Hume D.A."/>
            <person name="Kai C."/>
            <person name="Sasaki D."/>
            <person name="Tomaru Y."/>
            <person name="Fukuda S."/>
            <person name="Kanamori-Katayama M."/>
            <person name="Suzuki M."/>
            <person name="Aoki J."/>
            <person name="Arakawa T."/>
            <person name="Iida J."/>
            <person name="Imamura K."/>
            <person name="Itoh M."/>
            <person name="Kato T."/>
            <person name="Kawaji H."/>
            <person name="Kawagashira N."/>
            <person name="Kawashima T."/>
            <person name="Kojima M."/>
            <person name="Kondo S."/>
            <person name="Konno H."/>
            <person name="Nakano K."/>
            <person name="Ninomiya N."/>
            <person name="Nishio T."/>
            <person name="Okada M."/>
            <person name="Plessy C."/>
            <person name="Shibata K."/>
            <person name="Shiraki T."/>
            <person name="Suzuki S."/>
            <person name="Tagami M."/>
            <person name="Waki K."/>
            <person name="Watahiki A."/>
            <person name="Okamura-Oho Y."/>
            <person name="Suzuki H."/>
            <person name="Kawai J."/>
            <person name="Hayashizaki Y."/>
        </authorList>
    </citation>
    <scope>NUCLEOTIDE SEQUENCE [LARGE SCALE MRNA]</scope>
    <source>
        <strain>C57BL/6J</strain>
        <tissue>Embryo</tissue>
    </source>
</reference>
<reference key="2">
    <citation type="journal article" date="2004" name="Genome Res.">
        <title>The status, quality, and expansion of the NIH full-length cDNA project: the Mammalian Gene Collection (MGC).</title>
        <authorList>
            <consortium name="The MGC Project Team"/>
        </authorList>
    </citation>
    <scope>NUCLEOTIDE SEQUENCE [LARGE SCALE MRNA] OF 62-330</scope>
    <source>
        <tissue>Mammary tumor</tissue>
    </source>
</reference>
<reference key="3">
    <citation type="journal article" date="2015" name="J. Biol. Chem.">
        <title>New members of the mammalian glycerophosphodiester phosphodiesterase family: GDE4 and GDE7 produce lysophosphatidic acid by lysophospholipase D activity.</title>
        <authorList>
            <person name="Ohshima N."/>
            <person name="Kudo T."/>
            <person name="Yamashita Y."/>
            <person name="Mariggio S."/>
            <person name="Araki M."/>
            <person name="Honda A."/>
            <person name="Nagano T."/>
            <person name="Isaji C."/>
            <person name="Kato N."/>
            <person name="Corda D."/>
            <person name="Izumi T."/>
            <person name="Yanaka N."/>
        </authorList>
    </citation>
    <scope>SUBCELLULAR LOCATION</scope>
    <scope>TISSUE SPECIFICITY</scope>
    <scope>CATALYTIC ACTIVITY</scope>
    <scope>BIOPHYSICOCHEMICAL PROPERTIES</scope>
    <scope>FUNCTION</scope>
</reference>
<reference key="4">
    <citation type="journal article" date="2016" name="Biochim. Biophys. Acta">
        <title>Calcium-dependent generation of N-acylethanolamines and lysophosphatidic acids by glycerophosphodiesterase GDE7.</title>
        <authorList>
            <person name="Rahman I.A."/>
            <person name="Tsuboi K."/>
            <person name="Hussain Z."/>
            <person name="Yamashita R."/>
            <person name="Okamoto Y."/>
            <person name="Uyama T."/>
            <person name="Yamazaki N."/>
            <person name="Tanaka T."/>
            <person name="Tokumura A."/>
            <person name="Ueda N."/>
        </authorList>
    </citation>
    <scope>CATALYTIC ACTIVITY</scope>
    <scope>FUNCTION</scope>
    <scope>TISSUE SPECIFICITY</scope>
</reference>
<organism>
    <name type="scientific">Mus musculus</name>
    <name type="common">Mouse</name>
    <dbReference type="NCBI Taxonomy" id="10090"/>
    <lineage>
        <taxon>Eukaryota</taxon>
        <taxon>Metazoa</taxon>
        <taxon>Chordata</taxon>
        <taxon>Craniata</taxon>
        <taxon>Vertebrata</taxon>
        <taxon>Euteleostomi</taxon>
        <taxon>Mammalia</taxon>
        <taxon>Eutheria</taxon>
        <taxon>Euarchontoglires</taxon>
        <taxon>Glires</taxon>
        <taxon>Rodentia</taxon>
        <taxon>Myomorpha</taxon>
        <taxon>Muroidea</taxon>
        <taxon>Muridae</taxon>
        <taxon>Murinae</taxon>
        <taxon>Mus</taxon>
        <taxon>Mus</taxon>
    </lineage>
</organism>
<feature type="chain" id="PRO_0000251937" description="Lysophospholipase D GDPD3">
    <location>
        <begin position="1"/>
        <end position="330"/>
    </location>
</feature>
<feature type="topological domain" description="Cytoplasmic" evidence="2">
    <location>
        <position position="1"/>
    </location>
</feature>
<feature type="transmembrane region" description="Helical" evidence="2">
    <location>
        <begin position="2"/>
        <end position="22"/>
    </location>
</feature>
<feature type="topological domain" description="Extracellular" evidence="2">
    <location>
        <begin position="23"/>
        <end position="200"/>
    </location>
</feature>
<feature type="transmembrane region" description="Helical" evidence="2">
    <location>
        <begin position="201"/>
        <end position="221"/>
    </location>
</feature>
<feature type="topological domain" description="Cytoplasmic" evidence="2">
    <location>
        <begin position="222"/>
        <end position="330"/>
    </location>
</feature>
<feature type="domain" description="GP-PDE">
    <location>
        <begin position="39"/>
        <end position="308"/>
    </location>
</feature>
<feature type="region of interest" description="Disordered" evidence="3">
    <location>
        <begin position="311"/>
        <end position="330"/>
    </location>
</feature>
<feature type="binding site" evidence="2">
    <location>
        <position position="71"/>
    </location>
    <ligand>
        <name>a divalent metal cation</name>
        <dbReference type="ChEBI" id="CHEBI:60240"/>
    </ligand>
</feature>
<feature type="binding site" evidence="2">
    <location>
        <position position="73"/>
    </location>
    <ligand>
        <name>a divalent metal cation</name>
        <dbReference type="ChEBI" id="CHEBI:60240"/>
    </ligand>
</feature>
<feature type="binding site" evidence="2">
    <location>
        <position position="86"/>
    </location>
    <ligand>
        <name>a divalent metal cation</name>
        <dbReference type="ChEBI" id="CHEBI:60240"/>
    </ligand>
</feature>